<organism>
    <name type="scientific">Campylobacter jejuni subsp. jejuni serotype O:6 (strain 81116 / NCTC 11828)</name>
    <dbReference type="NCBI Taxonomy" id="407148"/>
    <lineage>
        <taxon>Bacteria</taxon>
        <taxon>Pseudomonadati</taxon>
        <taxon>Campylobacterota</taxon>
        <taxon>Epsilonproteobacteria</taxon>
        <taxon>Campylobacterales</taxon>
        <taxon>Campylobacteraceae</taxon>
        <taxon>Campylobacter</taxon>
    </lineage>
</organism>
<protein>
    <recommendedName>
        <fullName evidence="1">Adenylate kinase</fullName>
        <shortName evidence="1">AK</shortName>
        <ecNumber evidence="1">2.7.4.3</ecNumber>
    </recommendedName>
    <alternativeName>
        <fullName evidence="1">ATP-AMP transphosphorylase</fullName>
    </alternativeName>
    <alternativeName>
        <fullName evidence="1">ATP:AMP phosphotransferase</fullName>
    </alternativeName>
    <alternativeName>
        <fullName evidence="1">Adenylate monophosphate kinase</fullName>
    </alternativeName>
</protein>
<evidence type="ECO:0000255" key="1">
    <source>
        <dbReference type="HAMAP-Rule" id="MF_00235"/>
    </source>
</evidence>
<reference key="1">
    <citation type="journal article" date="2007" name="J. Bacteriol.">
        <title>The complete genome sequence of Campylobacter jejuni strain 81116 (NCTC11828).</title>
        <authorList>
            <person name="Pearson B.M."/>
            <person name="Gaskin D.J.H."/>
            <person name="Segers R.P.A.M."/>
            <person name="Wells J.M."/>
            <person name="Nuijten P.J.M."/>
            <person name="van Vliet A.H.M."/>
        </authorList>
    </citation>
    <scope>NUCLEOTIDE SEQUENCE [LARGE SCALE GENOMIC DNA]</scope>
    <source>
        <strain>81116 / NCTC 11828</strain>
    </source>
</reference>
<keyword id="KW-0067">ATP-binding</keyword>
<keyword id="KW-0963">Cytoplasm</keyword>
<keyword id="KW-0418">Kinase</keyword>
<keyword id="KW-0545">Nucleotide biosynthesis</keyword>
<keyword id="KW-0547">Nucleotide-binding</keyword>
<keyword id="KW-0808">Transferase</keyword>
<name>KAD_CAMJ8</name>
<dbReference type="EC" id="2.7.4.3" evidence="1"/>
<dbReference type="EMBL" id="CP000814">
    <property type="protein sequence ID" value="ABV52197.1"/>
    <property type="molecule type" value="Genomic_DNA"/>
</dbReference>
<dbReference type="RefSeq" id="WP_002855137.1">
    <property type="nucleotide sequence ID" value="NC_009839.1"/>
</dbReference>
<dbReference type="SMR" id="A8FL60"/>
<dbReference type="KEGG" id="cju:C8J_0598"/>
<dbReference type="HOGENOM" id="CLU_032354_4_1_7"/>
<dbReference type="UniPathway" id="UPA00588">
    <property type="reaction ID" value="UER00649"/>
</dbReference>
<dbReference type="GO" id="GO:0005737">
    <property type="term" value="C:cytoplasm"/>
    <property type="evidence" value="ECO:0007669"/>
    <property type="project" value="UniProtKB-SubCell"/>
</dbReference>
<dbReference type="GO" id="GO:0004017">
    <property type="term" value="F:adenylate kinase activity"/>
    <property type="evidence" value="ECO:0007669"/>
    <property type="project" value="UniProtKB-UniRule"/>
</dbReference>
<dbReference type="GO" id="GO:0005524">
    <property type="term" value="F:ATP binding"/>
    <property type="evidence" value="ECO:0007669"/>
    <property type="project" value="UniProtKB-UniRule"/>
</dbReference>
<dbReference type="GO" id="GO:0044209">
    <property type="term" value="P:AMP salvage"/>
    <property type="evidence" value="ECO:0007669"/>
    <property type="project" value="UniProtKB-UniRule"/>
</dbReference>
<dbReference type="CDD" id="cd01428">
    <property type="entry name" value="ADK"/>
    <property type="match status" value="1"/>
</dbReference>
<dbReference type="Gene3D" id="3.40.50.300">
    <property type="entry name" value="P-loop containing nucleotide triphosphate hydrolases"/>
    <property type="match status" value="1"/>
</dbReference>
<dbReference type="HAMAP" id="MF_00235">
    <property type="entry name" value="Adenylate_kinase_Adk"/>
    <property type="match status" value="1"/>
</dbReference>
<dbReference type="InterPro" id="IPR000850">
    <property type="entry name" value="Adenylat/UMP-CMP_kin"/>
</dbReference>
<dbReference type="InterPro" id="IPR033690">
    <property type="entry name" value="Adenylat_kinase_CS"/>
</dbReference>
<dbReference type="InterPro" id="IPR027417">
    <property type="entry name" value="P-loop_NTPase"/>
</dbReference>
<dbReference type="NCBIfam" id="NF001384">
    <property type="entry name" value="PRK00279.2-2"/>
    <property type="match status" value="1"/>
</dbReference>
<dbReference type="PANTHER" id="PTHR23359">
    <property type="entry name" value="NUCLEOTIDE KINASE"/>
    <property type="match status" value="1"/>
</dbReference>
<dbReference type="Pfam" id="PF00406">
    <property type="entry name" value="ADK"/>
    <property type="match status" value="1"/>
</dbReference>
<dbReference type="PRINTS" id="PR00094">
    <property type="entry name" value="ADENYLTKNASE"/>
</dbReference>
<dbReference type="SUPFAM" id="SSF52540">
    <property type="entry name" value="P-loop containing nucleoside triphosphate hydrolases"/>
    <property type="match status" value="1"/>
</dbReference>
<dbReference type="PROSITE" id="PS00113">
    <property type="entry name" value="ADENYLATE_KINASE"/>
    <property type="match status" value="1"/>
</dbReference>
<feature type="chain" id="PRO_1000071796" description="Adenylate kinase">
    <location>
        <begin position="1"/>
        <end position="192"/>
    </location>
</feature>
<feature type="region of interest" description="NMP" evidence="1">
    <location>
        <begin position="34"/>
        <end position="63"/>
    </location>
</feature>
<feature type="region of interest" description="LID" evidence="1">
    <location>
        <begin position="130"/>
        <end position="136"/>
    </location>
</feature>
<feature type="binding site" evidence="1">
    <location>
        <begin position="12"/>
        <end position="17"/>
    </location>
    <ligand>
        <name>ATP</name>
        <dbReference type="ChEBI" id="CHEBI:30616"/>
    </ligand>
</feature>
<feature type="binding site" evidence="1">
    <location>
        <position position="35"/>
    </location>
    <ligand>
        <name>AMP</name>
        <dbReference type="ChEBI" id="CHEBI:456215"/>
    </ligand>
</feature>
<feature type="binding site" evidence="1">
    <location>
        <position position="40"/>
    </location>
    <ligand>
        <name>AMP</name>
        <dbReference type="ChEBI" id="CHEBI:456215"/>
    </ligand>
</feature>
<feature type="binding site" evidence="1">
    <location>
        <begin position="61"/>
        <end position="63"/>
    </location>
    <ligand>
        <name>AMP</name>
        <dbReference type="ChEBI" id="CHEBI:456215"/>
    </ligand>
</feature>
<feature type="binding site" evidence="1">
    <location>
        <begin position="88"/>
        <end position="91"/>
    </location>
    <ligand>
        <name>AMP</name>
        <dbReference type="ChEBI" id="CHEBI:456215"/>
    </ligand>
</feature>
<feature type="binding site" evidence="1">
    <location>
        <position position="95"/>
    </location>
    <ligand>
        <name>AMP</name>
        <dbReference type="ChEBI" id="CHEBI:456215"/>
    </ligand>
</feature>
<feature type="binding site" evidence="1">
    <location>
        <position position="131"/>
    </location>
    <ligand>
        <name>ATP</name>
        <dbReference type="ChEBI" id="CHEBI:30616"/>
    </ligand>
</feature>
<feature type="binding site" evidence="1">
    <location>
        <position position="133"/>
    </location>
    <ligand>
        <name>AMP</name>
        <dbReference type="ChEBI" id="CHEBI:456215"/>
    </ligand>
</feature>
<feature type="binding site" evidence="1">
    <location>
        <position position="145"/>
    </location>
    <ligand>
        <name>AMP</name>
        <dbReference type="ChEBI" id="CHEBI:456215"/>
    </ligand>
</feature>
<feature type="binding site" evidence="1">
    <location>
        <position position="173"/>
    </location>
    <ligand>
        <name>ATP</name>
        <dbReference type="ChEBI" id="CHEBI:30616"/>
    </ligand>
</feature>
<gene>
    <name evidence="1" type="primary">adk</name>
    <name type="ordered locus">C8J_0598</name>
</gene>
<comment type="function">
    <text evidence="1">Catalyzes the reversible transfer of the terminal phosphate group between ATP and AMP. Plays an important role in cellular energy homeostasis and in adenine nucleotide metabolism.</text>
</comment>
<comment type="catalytic activity">
    <reaction evidence="1">
        <text>AMP + ATP = 2 ADP</text>
        <dbReference type="Rhea" id="RHEA:12973"/>
        <dbReference type="ChEBI" id="CHEBI:30616"/>
        <dbReference type="ChEBI" id="CHEBI:456215"/>
        <dbReference type="ChEBI" id="CHEBI:456216"/>
        <dbReference type="EC" id="2.7.4.3"/>
    </reaction>
</comment>
<comment type="pathway">
    <text evidence="1">Purine metabolism; AMP biosynthesis via salvage pathway; AMP from ADP: step 1/1.</text>
</comment>
<comment type="subunit">
    <text evidence="1">Monomer.</text>
</comment>
<comment type="subcellular location">
    <subcellularLocation>
        <location evidence="1">Cytoplasm</location>
    </subcellularLocation>
</comment>
<comment type="domain">
    <text evidence="1">Consists of three domains, a large central CORE domain and two small peripheral domains, NMPbind and LID, which undergo movements during catalysis. The LID domain closes over the site of phosphoryl transfer upon ATP binding. Assembling and dissambling the active center during each catalytic cycle provides an effective means to prevent ATP hydrolysis.</text>
</comment>
<comment type="similarity">
    <text evidence="1">Belongs to the adenylate kinase family.</text>
</comment>
<accession>A8FL60</accession>
<sequence>MKELFLIIGAPGSGKTTDASLIAQADATNITHYSTGDLLRAEVASGSELGKTIDSFISKGNLVPLDVVVNTIVCALKAAPTKTIIIDGYPRSVEQMMEFDKVLSEQNEICLKGVIEVRVSEEVAKERVLGRNRGADDNEEVFYNRMKVYTEPLNEILDFYQKKKLHFIIDGERTIEPIVADMKELIKKIQSI</sequence>
<proteinExistence type="inferred from homology"/>